<accession>Q6IV18</accession>
<accession>Q66VU2</accession>
<sequence length="89" mass="9997">MRILQLLFAIVVILLLQDAPARGFSDSQLCRNNHGHCRRLCFHMESWAGSCMNGRLRCCRFSTKQPFSNPKHSVLHTAEQDPSPSLGGT</sequence>
<keyword id="KW-0025">Alternative splicing</keyword>
<keyword id="KW-0044">Antibiotic</keyword>
<keyword id="KW-0929">Antimicrobial</keyword>
<keyword id="KW-0211">Defensin</keyword>
<keyword id="KW-1015">Disulfide bond</keyword>
<keyword id="KW-1185">Reference proteome</keyword>
<keyword id="KW-0964">Secreted</keyword>
<keyword id="KW-0732">Signal</keyword>
<feature type="signal peptide" evidence="2">
    <location>
        <begin position="1"/>
        <end position="23"/>
    </location>
</feature>
<feature type="chain" id="PRO_0000288577" description="Gallinacin-13">
    <location>
        <begin position="24"/>
        <end position="89"/>
    </location>
</feature>
<feature type="region of interest" description="Disordered" evidence="3">
    <location>
        <begin position="66"/>
        <end position="89"/>
    </location>
</feature>
<feature type="disulfide bond" evidence="1">
    <location>
        <begin position="30"/>
        <end position="58"/>
    </location>
</feature>
<feature type="disulfide bond" evidence="1">
    <location>
        <begin position="37"/>
        <end position="51"/>
    </location>
</feature>
<feature type="disulfide bond" evidence="1">
    <location>
        <begin position="41"/>
        <end position="59"/>
    </location>
</feature>
<feature type="splice variant" id="VSP_025714" description="In isoform 2." evidence="7 8">
    <location>
        <begin position="61"/>
        <end position="89"/>
    </location>
</feature>
<proteinExistence type="evidence at transcript level"/>
<evidence type="ECO:0000250" key="1"/>
<evidence type="ECO:0000255" key="2"/>
<evidence type="ECO:0000256" key="3">
    <source>
        <dbReference type="SAM" id="MobiDB-lite"/>
    </source>
</evidence>
<evidence type="ECO:0000269" key="4">
    <source>
    </source>
</evidence>
<evidence type="ECO:0000269" key="5">
    <source>
    </source>
</evidence>
<evidence type="ECO:0000269" key="6">
    <source>
    </source>
</evidence>
<evidence type="ECO:0000303" key="7">
    <source>
    </source>
</evidence>
<evidence type="ECO:0000303" key="8">
    <source ref="3"/>
</evidence>
<evidence type="ECO:0000305" key="9"/>
<comment type="function">
    <text evidence="5">Has bactericidal activity. Potent activity against E.coli, L.monocytogenes, S.typhimurium and S.pyogenes but mot against S.aureus.</text>
</comment>
<comment type="function">
    <text evidence="1">Has bactericidal activity.</text>
</comment>
<comment type="subcellular location">
    <subcellularLocation>
        <location>Secreted</location>
    </subcellularLocation>
    <subcellularLocation>
        <location evidence="1">Cytoplasmic granule</location>
    </subcellularLocation>
</comment>
<comment type="alternative products">
    <event type="alternative splicing"/>
    <isoform>
        <id>Q6IV18-1</id>
        <name>1</name>
        <sequence type="displayed"/>
    </isoform>
    <isoform>
        <id>Q6IV18-2</id>
        <name>2</name>
        <sequence type="described" ref="VSP_025714"/>
    </isoform>
</comment>
<comment type="tissue specificity">
    <text evidence="4 5 6">Expressed in the liver, gall bladder, kidney, small intestine, spleen, testis, ovary and male and female reproductive tracts. Not detected in the ovarian stroma and the theca and granulosa layers of the ovarian follicle.</text>
</comment>
<comment type="similarity">
    <text evidence="9">Belongs to the beta-defensin family.</text>
</comment>
<dbReference type="EMBL" id="AY621315">
    <property type="protein sequence ID" value="AAT45553.1"/>
    <property type="molecule type" value="mRNA"/>
</dbReference>
<dbReference type="EMBL" id="AY621328">
    <property type="protein sequence ID" value="AAT48937.1"/>
    <property type="molecule type" value="Genomic_DNA"/>
</dbReference>
<dbReference type="EMBL" id="AY701473">
    <property type="protein sequence ID" value="AAU07921.1"/>
    <property type="molecule type" value="mRNA"/>
</dbReference>
<dbReference type="EMBL" id="DQ677644">
    <property type="protein sequence ID" value="ABG73378.1"/>
    <property type="molecule type" value="mRNA"/>
</dbReference>
<dbReference type="EMBL" id="DQ858310">
    <property type="protein sequence ID" value="ABI48225.1"/>
    <property type="molecule type" value="mRNA"/>
</dbReference>
<dbReference type="EMBL" id="DQ858323">
    <property type="protein sequence ID" value="ABI48239.1"/>
    <property type="molecule type" value="mRNA"/>
</dbReference>
<dbReference type="EMBL" id="DQ858336">
    <property type="protein sequence ID" value="ABI48252.1"/>
    <property type="molecule type" value="mRNA"/>
</dbReference>
<dbReference type="EMBL" id="DQ858350">
    <property type="protein sequence ID" value="ABI48266.1"/>
    <property type="molecule type" value="mRNA"/>
</dbReference>
<dbReference type="RefSeq" id="NP_001001780.1">
    <molecule id="Q6IV18-1"/>
    <property type="nucleotide sequence ID" value="NM_001001780.1"/>
</dbReference>
<dbReference type="SMR" id="Q6IV18"/>
<dbReference type="FunCoup" id="Q6IV18">
    <property type="interactions" value="17"/>
</dbReference>
<dbReference type="STRING" id="9031.ENSGALP00000030910"/>
<dbReference type="PaxDb" id="9031-ENSGALP00000030910"/>
<dbReference type="Ensembl" id="ENSGALT00010027254.1">
    <molecule id="Q6IV18-1"/>
    <property type="protein sequence ID" value="ENSGALP00010015517.1"/>
    <property type="gene ID" value="ENSGALG00010011392.1"/>
</dbReference>
<dbReference type="GeneID" id="414877"/>
<dbReference type="KEGG" id="gga:414877"/>
<dbReference type="CTD" id="414877"/>
<dbReference type="VEuPathDB" id="HostDB:geneid_414877"/>
<dbReference type="eggNOG" id="ENOG502TDIW">
    <property type="taxonomic scope" value="Eukaryota"/>
</dbReference>
<dbReference type="GeneTree" id="ENSGT00940000165539"/>
<dbReference type="HOGENOM" id="CLU_189296_0_0_1"/>
<dbReference type="InParanoid" id="Q6IV18"/>
<dbReference type="OMA" id="ERWEGSC"/>
<dbReference type="OrthoDB" id="9835818at2759"/>
<dbReference type="PRO" id="PR:Q6IV18"/>
<dbReference type="Proteomes" id="UP000000539">
    <property type="component" value="Chromosome 3"/>
</dbReference>
<dbReference type="Bgee" id="ENSGALG00000019848">
    <property type="expression patterns" value="Expressed in liver and 6 other cell types or tissues"/>
</dbReference>
<dbReference type="GO" id="GO:0005615">
    <property type="term" value="C:extracellular space"/>
    <property type="evidence" value="ECO:0000318"/>
    <property type="project" value="GO_Central"/>
</dbReference>
<dbReference type="GO" id="GO:0031731">
    <property type="term" value="F:CCR6 chemokine receptor binding"/>
    <property type="evidence" value="ECO:0000318"/>
    <property type="project" value="GO_Central"/>
</dbReference>
<dbReference type="GO" id="GO:0050829">
    <property type="term" value="P:defense response to Gram-negative bacterium"/>
    <property type="evidence" value="ECO:0000318"/>
    <property type="project" value="GO_Central"/>
</dbReference>
<dbReference type="GO" id="GO:0050830">
    <property type="term" value="P:defense response to Gram-positive bacterium"/>
    <property type="evidence" value="ECO:0000318"/>
    <property type="project" value="GO_Central"/>
</dbReference>
<dbReference type="GO" id="GO:0002227">
    <property type="term" value="P:innate immune response in mucosa"/>
    <property type="evidence" value="ECO:0000318"/>
    <property type="project" value="GO_Central"/>
</dbReference>
<dbReference type="CDD" id="cd21908">
    <property type="entry name" value="BDD_Gal13"/>
    <property type="match status" value="1"/>
</dbReference>
<dbReference type="InterPro" id="IPR001855">
    <property type="entry name" value="Defensin_beta-like"/>
</dbReference>
<dbReference type="PANTHER" id="PTHR21388:SF9">
    <property type="entry name" value="BETA-DEFENSIN 1"/>
    <property type="match status" value="1"/>
</dbReference>
<dbReference type="PANTHER" id="PTHR21388">
    <property type="entry name" value="BETA-DEFENSIN-RELATED"/>
    <property type="match status" value="1"/>
</dbReference>
<dbReference type="Pfam" id="PF00711">
    <property type="entry name" value="Defensin_beta"/>
    <property type="match status" value="1"/>
</dbReference>
<dbReference type="SUPFAM" id="SSF57392">
    <property type="entry name" value="Defensin-like"/>
    <property type="match status" value="1"/>
</dbReference>
<name>GLL13_CHICK</name>
<organism>
    <name type="scientific">Gallus gallus</name>
    <name type="common">Chicken</name>
    <dbReference type="NCBI Taxonomy" id="9031"/>
    <lineage>
        <taxon>Eukaryota</taxon>
        <taxon>Metazoa</taxon>
        <taxon>Chordata</taxon>
        <taxon>Craniata</taxon>
        <taxon>Vertebrata</taxon>
        <taxon>Euteleostomi</taxon>
        <taxon>Archelosauria</taxon>
        <taxon>Archosauria</taxon>
        <taxon>Dinosauria</taxon>
        <taxon>Saurischia</taxon>
        <taxon>Theropoda</taxon>
        <taxon>Coelurosauria</taxon>
        <taxon>Aves</taxon>
        <taxon>Neognathae</taxon>
        <taxon>Galloanserae</taxon>
        <taxon>Galliformes</taxon>
        <taxon>Phasianidae</taxon>
        <taxon>Phasianinae</taxon>
        <taxon>Gallus</taxon>
    </lineage>
</organism>
<gene>
    <name type="primary">GAL13</name>
</gene>
<protein>
    <recommendedName>
        <fullName>Gallinacin-13</fullName>
        <shortName>Gal-13</shortName>
    </recommendedName>
    <alternativeName>
        <fullName>Beta-defensin 13</fullName>
    </alternativeName>
    <alternativeName>
        <fullName>Gallinacin-11</fullName>
        <shortName>Gal-11</shortName>
    </alternativeName>
</protein>
<reference key="1">
    <citation type="journal article" date="2004" name="BMC Genomics">
        <title>A genome-wide screen identifies a single beta-defensin gene cluster in the chicken: implications for the origin and evolution of mammalian defensins.</title>
        <authorList>
            <person name="Xiao Y."/>
            <person name="Hughes A.L."/>
            <person name="Ando J."/>
            <person name="Matsuda Y."/>
            <person name="Cheng J.-F."/>
            <person name="Skinner-Noble D."/>
            <person name="Zhang G."/>
        </authorList>
    </citation>
    <scope>NUCLEOTIDE SEQUENCE [GENOMIC DNA / MRNA] (ISOFORM 1)</scope>
    <scope>TISSUE SPECIFICITY</scope>
</reference>
<reference key="2">
    <citation type="journal article" date="2005" name="Immunogenetics">
        <title>The synthetic form of a novel chicken beta-defensin identified in silico is predominantly active against intestinal pathogens.</title>
        <authorList>
            <person name="Higgs R."/>
            <person name="Lynn D.J."/>
            <person name="Gaines S."/>
            <person name="McMahon J."/>
            <person name="Tierney J."/>
            <person name="James T."/>
            <person name="Lloyd A.T."/>
            <person name="Mulcahy G."/>
            <person name="O'Farrelly C."/>
        </authorList>
    </citation>
    <scope>NUCLEOTIDE SEQUENCE [MRNA] (ISOFORM 2)</scope>
    <scope>FUNCTION</scope>
    <scope>TISSUE SPECIFICITY</scope>
    <source>
        <tissue>Gall bladder</tissue>
    </source>
</reference>
<reference key="3">
    <citation type="submission" date="2006-07" db="EMBL/GenBank/DDBJ databases">
        <title>Chicken beta-defensin in China chicken breeds.</title>
        <authorList>
            <person name="Chen Y."/>
            <person name="Cao Y."/>
            <person name="Xie Q."/>
            <person name="Bi Y."/>
            <person name="Chen J."/>
        </authorList>
    </citation>
    <scope>NUCLEOTIDE SEQUENCE [MRNA] (ISOFORM 2)</scope>
    <source>
        <strain>Guangxi Huang</strain>
        <strain>Huiyang bearded</strain>
        <strain>Qingyuan Ma</strain>
        <strain>Taihe silkies</strain>
        <strain>Xinghua</strain>
    </source>
</reference>
<reference key="4">
    <citation type="journal article" date="2007" name="Reproduction">
        <title>Changes in the expression of gallinacins, antimicrobial peptides, in ovarian follicles during follicular growth and in response to lipopolysaccharide in laying hens (Gallus domesticus).</title>
        <authorList>
            <person name="Subedi K."/>
            <person name="Isobe N."/>
            <person name="Nishibori M."/>
            <person name="Yoshimura Y."/>
        </authorList>
    </citation>
    <scope>TISSUE SPECIFICITY</scope>
</reference>